<sequence>MQYQNPNTLQAVILDWAGTVVDFGSFAPTQIFVEAFAEFDVQVSIEEARGPMGMGKWDHIRTLCDQPQVAERYRKAFGRTPTDDDVTAIYQRFMPLQIEKIAEHSALIPGALDTIARLRVQGIKVGSCSGYPKQVMDKVVALAATNGYIADHVVATDEVPNGRPWPAQALANVIALGIDDVAACVKVDDTVPGILEGRRAGMWTVALTCSGNALGLTYEQFRALDAATLASERKRIEAMFEGSRPHYLIDTITDLPAVISDINARLARGEMPQSN</sequence>
<feature type="chain" id="PRO_1000215089" description="Phosphonoacetaldehyde hydrolase">
    <location>
        <begin position="1"/>
        <end position="275"/>
    </location>
</feature>
<feature type="active site" description="Nucleophile" evidence="1">
    <location>
        <position position="15"/>
    </location>
</feature>
<feature type="active site" description="Schiff-base intermediate with substrate" evidence="1">
    <location>
        <position position="56"/>
    </location>
</feature>
<feature type="binding site" evidence="1">
    <location>
        <position position="15"/>
    </location>
    <ligand>
        <name>Mg(2+)</name>
        <dbReference type="ChEBI" id="CHEBI:18420"/>
    </ligand>
</feature>
<feature type="binding site" evidence="1">
    <location>
        <position position="17"/>
    </location>
    <ligand>
        <name>Mg(2+)</name>
        <dbReference type="ChEBI" id="CHEBI:18420"/>
    </ligand>
</feature>
<feature type="binding site" evidence="1">
    <location>
        <position position="189"/>
    </location>
    <ligand>
        <name>Mg(2+)</name>
        <dbReference type="ChEBI" id="CHEBI:18420"/>
    </ligand>
</feature>
<proteinExistence type="inferred from homology"/>
<reference key="1">
    <citation type="journal article" date="2009" name="Genome Biol.">
        <title>Genomic and genetic analyses of diversity and plant interactions of Pseudomonas fluorescens.</title>
        <authorList>
            <person name="Silby M.W."/>
            <person name="Cerdeno-Tarraga A.M."/>
            <person name="Vernikos G.S."/>
            <person name="Giddens S.R."/>
            <person name="Jackson R.W."/>
            <person name="Preston G.M."/>
            <person name="Zhang X.-X."/>
            <person name="Moon C.D."/>
            <person name="Gehrig S.M."/>
            <person name="Godfrey S.A.C."/>
            <person name="Knight C.G."/>
            <person name="Malone J.G."/>
            <person name="Robinson Z."/>
            <person name="Spiers A.J."/>
            <person name="Harris S."/>
            <person name="Challis G.L."/>
            <person name="Yaxley A.M."/>
            <person name="Harris D."/>
            <person name="Seeger K."/>
            <person name="Murphy L."/>
            <person name="Rutter S."/>
            <person name="Squares R."/>
            <person name="Quail M.A."/>
            <person name="Saunders E."/>
            <person name="Mavromatis K."/>
            <person name="Brettin T.S."/>
            <person name="Bentley S.D."/>
            <person name="Hothersall J."/>
            <person name="Stephens E."/>
            <person name="Thomas C.M."/>
            <person name="Parkhill J."/>
            <person name="Levy S.B."/>
            <person name="Rainey P.B."/>
            <person name="Thomson N.R."/>
        </authorList>
    </citation>
    <scope>NUCLEOTIDE SEQUENCE [LARGE SCALE GENOMIC DNA]</scope>
    <source>
        <strain>SBW25</strain>
    </source>
</reference>
<keyword id="KW-0378">Hydrolase</keyword>
<keyword id="KW-0460">Magnesium</keyword>
<keyword id="KW-0479">Metal-binding</keyword>
<keyword id="KW-0704">Schiff base</keyword>
<comment type="function">
    <text evidence="1">Involved in phosphonate degradation.</text>
</comment>
<comment type="catalytic activity">
    <reaction evidence="1">
        <text>phosphonoacetaldehyde + H2O = acetaldehyde + phosphate + H(+)</text>
        <dbReference type="Rhea" id="RHEA:18905"/>
        <dbReference type="ChEBI" id="CHEBI:15343"/>
        <dbReference type="ChEBI" id="CHEBI:15377"/>
        <dbReference type="ChEBI" id="CHEBI:15378"/>
        <dbReference type="ChEBI" id="CHEBI:43474"/>
        <dbReference type="ChEBI" id="CHEBI:58383"/>
        <dbReference type="EC" id="3.11.1.1"/>
    </reaction>
</comment>
<comment type="cofactor">
    <cofactor evidence="1">
        <name>Mg(2+)</name>
        <dbReference type="ChEBI" id="CHEBI:18420"/>
    </cofactor>
    <text evidence="1">Binds 1 Mg(2+) ion per subunit.</text>
</comment>
<comment type="subunit">
    <text evidence="1">Homodimer.</text>
</comment>
<comment type="similarity">
    <text evidence="1">Belongs to the HAD-like hydrolase superfamily. PhnX family.</text>
</comment>
<gene>
    <name evidence="1" type="primary">phnX</name>
    <name type="ordered locus">PFLU_3912</name>
</gene>
<organism>
    <name type="scientific">Pseudomonas fluorescens (strain SBW25)</name>
    <dbReference type="NCBI Taxonomy" id="216595"/>
    <lineage>
        <taxon>Bacteria</taxon>
        <taxon>Pseudomonadati</taxon>
        <taxon>Pseudomonadota</taxon>
        <taxon>Gammaproteobacteria</taxon>
        <taxon>Pseudomonadales</taxon>
        <taxon>Pseudomonadaceae</taxon>
        <taxon>Pseudomonas</taxon>
    </lineage>
</organism>
<protein>
    <recommendedName>
        <fullName evidence="1">Phosphonoacetaldehyde hydrolase</fullName>
        <shortName evidence="1">Phosphonatase</shortName>
        <ecNumber evidence="1">3.11.1.1</ecNumber>
    </recommendedName>
    <alternativeName>
        <fullName evidence="1">Phosphonoacetaldehyde phosphonohydrolase</fullName>
    </alternativeName>
</protein>
<evidence type="ECO:0000255" key="1">
    <source>
        <dbReference type="HAMAP-Rule" id="MF_01375"/>
    </source>
</evidence>
<accession>C3JYI3</accession>
<name>PHNX_PSEFS</name>
<dbReference type="EC" id="3.11.1.1" evidence="1"/>
<dbReference type="EMBL" id="AM181176">
    <property type="protein sequence ID" value="CAY50286.1"/>
    <property type="molecule type" value="Genomic_DNA"/>
</dbReference>
<dbReference type="RefSeq" id="WP_015884708.1">
    <property type="nucleotide sequence ID" value="NC_012660.1"/>
</dbReference>
<dbReference type="SMR" id="C3JYI3"/>
<dbReference type="STRING" id="294.SRM1_03525"/>
<dbReference type="GeneID" id="93465260"/>
<dbReference type="PATRIC" id="fig|216595.4.peg.4057"/>
<dbReference type="eggNOG" id="COG0637">
    <property type="taxonomic scope" value="Bacteria"/>
</dbReference>
<dbReference type="HOGENOM" id="CLU_045011_12_0_6"/>
<dbReference type="OrthoDB" id="5504491at2"/>
<dbReference type="GO" id="GO:0005829">
    <property type="term" value="C:cytosol"/>
    <property type="evidence" value="ECO:0007669"/>
    <property type="project" value="TreeGrafter"/>
</dbReference>
<dbReference type="GO" id="GO:0000287">
    <property type="term" value="F:magnesium ion binding"/>
    <property type="evidence" value="ECO:0007669"/>
    <property type="project" value="UniProtKB-UniRule"/>
</dbReference>
<dbReference type="GO" id="GO:0008967">
    <property type="term" value="F:phosphoglycolate phosphatase activity"/>
    <property type="evidence" value="ECO:0007669"/>
    <property type="project" value="TreeGrafter"/>
</dbReference>
<dbReference type="GO" id="GO:0050194">
    <property type="term" value="F:phosphonoacetaldehyde hydrolase activity"/>
    <property type="evidence" value="ECO:0007669"/>
    <property type="project" value="UniProtKB-UniRule"/>
</dbReference>
<dbReference type="GO" id="GO:0006281">
    <property type="term" value="P:DNA repair"/>
    <property type="evidence" value="ECO:0007669"/>
    <property type="project" value="TreeGrafter"/>
</dbReference>
<dbReference type="GO" id="GO:0019700">
    <property type="term" value="P:organic phosphonate catabolic process"/>
    <property type="evidence" value="ECO:0007669"/>
    <property type="project" value="InterPro"/>
</dbReference>
<dbReference type="CDD" id="cd02586">
    <property type="entry name" value="HAD_PHN"/>
    <property type="match status" value="1"/>
</dbReference>
<dbReference type="FunFam" id="1.10.150.240:FF:000006">
    <property type="entry name" value="Phosphonoacetaldehyde hydrolase"/>
    <property type="match status" value="1"/>
</dbReference>
<dbReference type="Gene3D" id="3.40.50.1000">
    <property type="entry name" value="HAD superfamily/HAD-like"/>
    <property type="match status" value="1"/>
</dbReference>
<dbReference type="Gene3D" id="1.10.150.240">
    <property type="entry name" value="Putative phosphatase, domain 2"/>
    <property type="match status" value="1"/>
</dbReference>
<dbReference type="HAMAP" id="MF_01375">
    <property type="entry name" value="PhnX"/>
    <property type="match status" value="1"/>
</dbReference>
<dbReference type="InterPro" id="IPR050155">
    <property type="entry name" value="HAD-like_hydrolase_sf"/>
</dbReference>
<dbReference type="InterPro" id="IPR036412">
    <property type="entry name" value="HAD-like_sf"/>
</dbReference>
<dbReference type="InterPro" id="IPR006439">
    <property type="entry name" value="HAD-SF_hydro_IA"/>
</dbReference>
<dbReference type="InterPro" id="IPR023214">
    <property type="entry name" value="HAD_sf"/>
</dbReference>
<dbReference type="InterPro" id="IPR023198">
    <property type="entry name" value="PGP-like_dom2"/>
</dbReference>
<dbReference type="InterPro" id="IPR006323">
    <property type="entry name" value="Phosphonoacetald_hydro"/>
</dbReference>
<dbReference type="NCBIfam" id="TIGR01509">
    <property type="entry name" value="HAD-SF-IA-v3"/>
    <property type="match status" value="1"/>
</dbReference>
<dbReference type="NCBIfam" id="TIGR01422">
    <property type="entry name" value="phosphonatase"/>
    <property type="match status" value="1"/>
</dbReference>
<dbReference type="PANTHER" id="PTHR43434">
    <property type="entry name" value="PHOSPHOGLYCOLATE PHOSPHATASE"/>
    <property type="match status" value="1"/>
</dbReference>
<dbReference type="PANTHER" id="PTHR43434:SF19">
    <property type="entry name" value="PHOSPHONOACETALDEHYDE HYDROLASE"/>
    <property type="match status" value="1"/>
</dbReference>
<dbReference type="Pfam" id="PF00702">
    <property type="entry name" value="Hydrolase"/>
    <property type="match status" value="1"/>
</dbReference>
<dbReference type="SFLD" id="SFLDG01135">
    <property type="entry name" value="C1.5.6:_HAD__Beta-PGM__Phospha"/>
    <property type="match status" value="1"/>
</dbReference>
<dbReference type="SFLD" id="SFLDF00038">
    <property type="entry name" value="phosphonoacetaldehyde_hydrolas"/>
    <property type="match status" value="1"/>
</dbReference>
<dbReference type="SUPFAM" id="SSF56784">
    <property type="entry name" value="HAD-like"/>
    <property type="match status" value="1"/>
</dbReference>